<organism>
    <name type="scientific">Lactobacillus johnsonii (strain CNCM I-12250 / La1 / NCC 533)</name>
    <dbReference type="NCBI Taxonomy" id="257314"/>
    <lineage>
        <taxon>Bacteria</taxon>
        <taxon>Bacillati</taxon>
        <taxon>Bacillota</taxon>
        <taxon>Bacilli</taxon>
        <taxon>Lactobacillales</taxon>
        <taxon>Lactobacillaceae</taxon>
        <taxon>Lactobacillus</taxon>
    </lineage>
</organism>
<proteinExistence type="inferred from homology"/>
<reference key="1">
    <citation type="journal article" date="2004" name="Proc. Natl. Acad. Sci. U.S.A.">
        <title>The genome sequence of the probiotic intestinal bacterium Lactobacillus johnsonii NCC 533.</title>
        <authorList>
            <person name="Pridmore R.D."/>
            <person name="Berger B."/>
            <person name="Desiere F."/>
            <person name="Vilanova D."/>
            <person name="Barretto C."/>
            <person name="Pittet A.-C."/>
            <person name="Zwahlen M.-C."/>
            <person name="Rouvet M."/>
            <person name="Altermann E."/>
            <person name="Barrangou R."/>
            <person name="Mollet B."/>
            <person name="Mercenier A."/>
            <person name="Klaenhammer T."/>
            <person name="Arigoni F."/>
            <person name="Schell M.A."/>
        </authorList>
    </citation>
    <scope>NUCLEOTIDE SEQUENCE [LARGE SCALE GENOMIC DNA]</scope>
    <source>
        <strain>CNCM I-1225 / La1 / NCC 533</strain>
    </source>
</reference>
<dbReference type="EC" id="6.1.1.20" evidence="1"/>
<dbReference type="EMBL" id="AE017198">
    <property type="protein sequence ID" value="AAS09397.1"/>
    <property type="molecule type" value="Genomic_DNA"/>
</dbReference>
<dbReference type="RefSeq" id="WP_011162320.1">
    <property type="nucleotide sequence ID" value="NC_005362.1"/>
</dbReference>
<dbReference type="SMR" id="Q74IE1"/>
<dbReference type="KEGG" id="ljo:LJ_1625"/>
<dbReference type="PATRIC" id="fig|257314.6.peg.1449"/>
<dbReference type="eggNOG" id="COG0016">
    <property type="taxonomic scope" value="Bacteria"/>
</dbReference>
<dbReference type="HOGENOM" id="CLU_025086_0_1_9"/>
<dbReference type="Proteomes" id="UP000000581">
    <property type="component" value="Chromosome"/>
</dbReference>
<dbReference type="GO" id="GO:0005737">
    <property type="term" value="C:cytoplasm"/>
    <property type="evidence" value="ECO:0007669"/>
    <property type="project" value="UniProtKB-SubCell"/>
</dbReference>
<dbReference type="GO" id="GO:0005524">
    <property type="term" value="F:ATP binding"/>
    <property type="evidence" value="ECO:0007669"/>
    <property type="project" value="UniProtKB-UniRule"/>
</dbReference>
<dbReference type="GO" id="GO:0140096">
    <property type="term" value="F:catalytic activity, acting on a protein"/>
    <property type="evidence" value="ECO:0007669"/>
    <property type="project" value="UniProtKB-ARBA"/>
</dbReference>
<dbReference type="GO" id="GO:0000287">
    <property type="term" value="F:magnesium ion binding"/>
    <property type="evidence" value="ECO:0007669"/>
    <property type="project" value="UniProtKB-UniRule"/>
</dbReference>
<dbReference type="GO" id="GO:0004826">
    <property type="term" value="F:phenylalanine-tRNA ligase activity"/>
    <property type="evidence" value="ECO:0007669"/>
    <property type="project" value="UniProtKB-UniRule"/>
</dbReference>
<dbReference type="GO" id="GO:0016740">
    <property type="term" value="F:transferase activity"/>
    <property type="evidence" value="ECO:0007669"/>
    <property type="project" value="UniProtKB-ARBA"/>
</dbReference>
<dbReference type="GO" id="GO:0000049">
    <property type="term" value="F:tRNA binding"/>
    <property type="evidence" value="ECO:0007669"/>
    <property type="project" value="InterPro"/>
</dbReference>
<dbReference type="GO" id="GO:0006432">
    <property type="term" value="P:phenylalanyl-tRNA aminoacylation"/>
    <property type="evidence" value="ECO:0007669"/>
    <property type="project" value="UniProtKB-UniRule"/>
</dbReference>
<dbReference type="CDD" id="cd00496">
    <property type="entry name" value="PheRS_alpha_core"/>
    <property type="match status" value="1"/>
</dbReference>
<dbReference type="FunFam" id="3.30.930.10:FF:000003">
    <property type="entry name" value="Phenylalanine--tRNA ligase alpha subunit"/>
    <property type="match status" value="1"/>
</dbReference>
<dbReference type="Gene3D" id="3.30.930.10">
    <property type="entry name" value="Bira Bifunctional Protein, Domain 2"/>
    <property type="match status" value="1"/>
</dbReference>
<dbReference type="HAMAP" id="MF_00281">
    <property type="entry name" value="Phe_tRNA_synth_alpha1"/>
    <property type="match status" value="1"/>
</dbReference>
<dbReference type="InterPro" id="IPR006195">
    <property type="entry name" value="aa-tRNA-synth_II"/>
</dbReference>
<dbReference type="InterPro" id="IPR045864">
    <property type="entry name" value="aa-tRNA-synth_II/BPL/LPL"/>
</dbReference>
<dbReference type="InterPro" id="IPR004529">
    <property type="entry name" value="Phe-tRNA-synth_IIc_asu"/>
</dbReference>
<dbReference type="InterPro" id="IPR004188">
    <property type="entry name" value="Phe-tRNA_ligase_II_N"/>
</dbReference>
<dbReference type="InterPro" id="IPR022911">
    <property type="entry name" value="Phe_tRNA_ligase_alpha1_bac"/>
</dbReference>
<dbReference type="InterPro" id="IPR002319">
    <property type="entry name" value="Phenylalanyl-tRNA_Synthase"/>
</dbReference>
<dbReference type="InterPro" id="IPR010978">
    <property type="entry name" value="tRNA-bd_arm"/>
</dbReference>
<dbReference type="NCBIfam" id="TIGR00468">
    <property type="entry name" value="pheS"/>
    <property type="match status" value="1"/>
</dbReference>
<dbReference type="PANTHER" id="PTHR11538:SF41">
    <property type="entry name" value="PHENYLALANINE--TRNA LIGASE, MITOCHONDRIAL"/>
    <property type="match status" value="1"/>
</dbReference>
<dbReference type="PANTHER" id="PTHR11538">
    <property type="entry name" value="PHENYLALANYL-TRNA SYNTHETASE"/>
    <property type="match status" value="1"/>
</dbReference>
<dbReference type="Pfam" id="PF02912">
    <property type="entry name" value="Phe_tRNA-synt_N"/>
    <property type="match status" value="1"/>
</dbReference>
<dbReference type="Pfam" id="PF01409">
    <property type="entry name" value="tRNA-synt_2d"/>
    <property type="match status" value="1"/>
</dbReference>
<dbReference type="SUPFAM" id="SSF55681">
    <property type="entry name" value="Class II aaRS and biotin synthetases"/>
    <property type="match status" value="1"/>
</dbReference>
<dbReference type="SUPFAM" id="SSF46589">
    <property type="entry name" value="tRNA-binding arm"/>
    <property type="match status" value="1"/>
</dbReference>
<dbReference type="PROSITE" id="PS50862">
    <property type="entry name" value="AA_TRNA_LIGASE_II"/>
    <property type="match status" value="1"/>
</dbReference>
<sequence length="349" mass="39931">MDLFDRINKLKEEGLNEIKQAENQKMLDKIRVELMGRKGELTEILHSMKDIAPENRPKVGQEVNQVRDLFQKQLDEAKNNFLQTLIAKKLEEEKIDVTLPGREGHLGSKHPINIILDDLESYFIGMGYEVVQGPEIETDHYVFEMMNLPKDHPARDMQATFYIDEENLLRTQTSGDQARVLEKHDFSKGPLKMVGPGKVYRRDDDDATHSHQFQQMEGLVIDKNVTMSDLKGTLEMIAKHVFGQDRKTRLRPSYFPFTEPSVEMDVSCFNCDGKGCPICKYTGWIEVLGAGMVHPNVLENAGVDSTVYGGFAFGLGLDRFAILKYGISDIRDFYTNDVRFLAQFRKEED</sequence>
<accession>Q74IE1</accession>
<comment type="catalytic activity">
    <reaction evidence="1">
        <text>tRNA(Phe) + L-phenylalanine + ATP = L-phenylalanyl-tRNA(Phe) + AMP + diphosphate + H(+)</text>
        <dbReference type="Rhea" id="RHEA:19413"/>
        <dbReference type="Rhea" id="RHEA-COMP:9668"/>
        <dbReference type="Rhea" id="RHEA-COMP:9699"/>
        <dbReference type="ChEBI" id="CHEBI:15378"/>
        <dbReference type="ChEBI" id="CHEBI:30616"/>
        <dbReference type="ChEBI" id="CHEBI:33019"/>
        <dbReference type="ChEBI" id="CHEBI:58095"/>
        <dbReference type="ChEBI" id="CHEBI:78442"/>
        <dbReference type="ChEBI" id="CHEBI:78531"/>
        <dbReference type="ChEBI" id="CHEBI:456215"/>
        <dbReference type="EC" id="6.1.1.20"/>
    </reaction>
</comment>
<comment type="cofactor">
    <cofactor evidence="1">
        <name>Mg(2+)</name>
        <dbReference type="ChEBI" id="CHEBI:18420"/>
    </cofactor>
    <text evidence="1">Binds 2 magnesium ions per tetramer.</text>
</comment>
<comment type="subunit">
    <text evidence="1">Tetramer of two alpha and two beta subunits.</text>
</comment>
<comment type="subcellular location">
    <subcellularLocation>
        <location evidence="1">Cytoplasm</location>
    </subcellularLocation>
</comment>
<comment type="similarity">
    <text evidence="1">Belongs to the class-II aminoacyl-tRNA synthetase family. Phe-tRNA synthetase alpha subunit type 1 subfamily.</text>
</comment>
<protein>
    <recommendedName>
        <fullName evidence="1">Phenylalanine--tRNA ligase alpha subunit</fullName>
        <ecNumber evidence="1">6.1.1.20</ecNumber>
    </recommendedName>
    <alternativeName>
        <fullName evidence="1">Phenylalanyl-tRNA synthetase alpha subunit</fullName>
        <shortName evidence="1">PheRS</shortName>
    </alternativeName>
</protein>
<evidence type="ECO:0000255" key="1">
    <source>
        <dbReference type="HAMAP-Rule" id="MF_00281"/>
    </source>
</evidence>
<gene>
    <name evidence="1" type="primary">pheS</name>
    <name type="ordered locus">LJ_1625</name>
</gene>
<feature type="chain" id="PRO_0000126717" description="Phenylalanine--tRNA ligase alpha subunit">
    <location>
        <begin position="1"/>
        <end position="349"/>
    </location>
</feature>
<feature type="binding site" evidence="1">
    <location>
        <position position="259"/>
    </location>
    <ligand>
        <name>Mg(2+)</name>
        <dbReference type="ChEBI" id="CHEBI:18420"/>
        <note>shared with beta subunit</note>
    </ligand>
</feature>
<keyword id="KW-0030">Aminoacyl-tRNA synthetase</keyword>
<keyword id="KW-0067">ATP-binding</keyword>
<keyword id="KW-0963">Cytoplasm</keyword>
<keyword id="KW-0436">Ligase</keyword>
<keyword id="KW-0460">Magnesium</keyword>
<keyword id="KW-0479">Metal-binding</keyword>
<keyword id="KW-0547">Nucleotide-binding</keyword>
<keyword id="KW-0648">Protein biosynthesis</keyword>
<name>SYFA_LACJO</name>